<keyword id="KW-1003">Cell membrane</keyword>
<keyword id="KW-0153">Cholesterol metabolism</keyword>
<keyword id="KW-1015">Disulfide bond</keyword>
<keyword id="KW-0325">Glycoprotein</keyword>
<keyword id="KW-0443">Lipid metabolism</keyword>
<keyword id="KW-0445">Lipid transport</keyword>
<keyword id="KW-0472">Membrane</keyword>
<keyword id="KW-1185">Reference proteome</keyword>
<keyword id="KW-0732">Signal</keyword>
<keyword id="KW-0753">Steroid metabolism</keyword>
<keyword id="KW-1207">Sterol metabolism</keyword>
<keyword id="KW-0812">Transmembrane</keyword>
<keyword id="KW-1133">Transmembrane helix</keyword>
<keyword id="KW-0813">Transport</keyword>
<protein>
    <recommendedName>
        <fullName evidence="6">NPC intracellular cholesterol transporter 1 homolog 1b</fullName>
    </recommendedName>
    <alternativeName>
        <fullName evidence="6">Niemann-Pick type protein homolog 1b</fullName>
    </alternativeName>
</protein>
<accession>Q9VRC9</accession>
<comment type="function">
    <text evidence="5">Important for cholesterol absorption at the midgut epithelium. Acts only in the early steps of sterol absorption, prior to Npc1a-dependent intracellular sterol trafficking.</text>
</comment>
<comment type="catalytic activity">
    <reaction evidence="1">
        <text>cholesterol(in) = cholesterol(out)</text>
        <dbReference type="Rhea" id="RHEA:39747"/>
        <dbReference type="ChEBI" id="CHEBI:16113"/>
    </reaction>
</comment>
<comment type="subcellular location">
    <subcellularLocation>
        <location evidence="7">Cell membrane</location>
        <topology evidence="2">Multi-pass membrane protein</topology>
    </subcellularLocation>
</comment>
<comment type="tissue specificity">
    <text evidence="5">Expressed in the midgut.</text>
</comment>
<comment type="developmental stage">
    <text evidence="5">Expressed specifically in the midgut epithelium. In third-instar larvae, expressed in the epithelium of two distinct areas of the midgut; the m2 and m10-m12 compartments. Levels decrease during pupation, and then increase in the adult midgut 2 days after eclosion.</text>
</comment>
<comment type="disruption phenotype">
    <text evidence="5">Larval lethal at the second instar stage. In larvae dietary cholesterol absorption is impaired. In the larval midgut there is a severe reduction in cholesterol and failure to accumulate cholesterol-rich trafficking organelles. No effect on total cholesterol content, possibly due to maternal contributions. Glucose absorption in the midgut is not affected.</text>
</comment>
<comment type="similarity">
    <text evidence="6">Belongs to the patched family.</text>
</comment>
<name>NPC1B_DROME</name>
<proteinExistence type="evidence at transcript level"/>
<gene>
    <name evidence="8" type="primary">Npc1b</name>
    <name evidence="8" type="ORF">CG12092</name>
</gene>
<feature type="signal peptide" evidence="2">
    <location>
        <begin position="1"/>
        <end position="16"/>
    </location>
</feature>
<feature type="chain" id="PRO_5004338412" description="NPC intracellular cholesterol transporter 1 homolog 1b">
    <location>
        <begin position="17"/>
        <end position="1254"/>
    </location>
</feature>
<feature type="topological domain" description="Extracellular" evidence="6">
    <location>
        <begin position="17"/>
        <end position="272"/>
    </location>
</feature>
<feature type="transmembrane region" description="Helical" evidence="2">
    <location>
        <begin position="273"/>
        <end position="293"/>
    </location>
</feature>
<feature type="topological domain" description="Cytoplasmic" evidence="6">
    <location>
        <begin position="294"/>
        <end position="325"/>
    </location>
</feature>
<feature type="transmembrane region" description="Helical" evidence="2">
    <location>
        <begin position="326"/>
        <end position="346"/>
    </location>
</feature>
<feature type="topological domain" description="Extracellular" evidence="6">
    <location>
        <begin position="347"/>
        <end position="593"/>
    </location>
</feature>
<feature type="transmembrane region" description="Helical" evidence="2">
    <location>
        <begin position="594"/>
        <end position="614"/>
    </location>
</feature>
<feature type="topological domain" description="Cytoplasmic" evidence="6">
    <location>
        <begin position="615"/>
        <end position="625"/>
    </location>
</feature>
<feature type="transmembrane region" description="Helical" evidence="2">
    <location>
        <begin position="626"/>
        <end position="646"/>
    </location>
</feature>
<feature type="topological domain" description="Extracellular" evidence="6">
    <location>
        <begin position="647"/>
        <end position="657"/>
    </location>
</feature>
<feature type="transmembrane region" description="Helical" evidence="2">
    <location>
        <begin position="658"/>
        <end position="678"/>
    </location>
</feature>
<feature type="topological domain" description="Cytoplasmic" evidence="6">
    <location>
        <begin position="679"/>
        <end position="736"/>
    </location>
</feature>
<feature type="transmembrane region" description="Helical" evidence="2">
    <location>
        <begin position="737"/>
        <end position="757"/>
    </location>
</feature>
<feature type="topological domain" description="Extracellular" evidence="6">
    <location>
        <begin position="758"/>
        <end position="815"/>
    </location>
</feature>
<feature type="transmembrane region" description="Helical" evidence="2">
    <location>
        <begin position="816"/>
        <end position="836"/>
    </location>
</feature>
<feature type="topological domain" description="Cytoplasmic" evidence="6">
    <location>
        <begin position="837"/>
        <end position="857"/>
    </location>
</feature>
<feature type="transmembrane region" description="Helical" evidence="2">
    <location>
        <begin position="858"/>
        <end position="878"/>
    </location>
</feature>
<feature type="topological domain" description="Extracellular" evidence="6">
    <location>
        <begin position="879"/>
        <end position="1079"/>
    </location>
</feature>
<feature type="transmembrane region" description="Helical" evidence="2">
    <location>
        <begin position="1080"/>
        <end position="1100"/>
    </location>
</feature>
<feature type="topological domain" description="Cytoplasmic" evidence="6">
    <location>
        <begin position="1101"/>
        <end position="1105"/>
    </location>
</feature>
<feature type="transmembrane region" description="Helical" evidence="2">
    <location>
        <begin position="1106"/>
        <end position="1126"/>
    </location>
</feature>
<feature type="topological domain" description="Extracellular" evidence="6">
    <location>
        <begin position="1127"/>
        <end position="1132"/>
    </location>
</feature>
<feature type="transmembrane region" description="Helical" evidence="2">
    <location>
        <begin position="1133"/>
        <end position="1153"/>
    </location>
</feature>
<feature type="topological domain" description="Cytoplasmic" evidence="6">
    <location>
        <begin position="1154"/>
        <end position="1174"/>
    </location>
</feature>
<feature type="transmembrane region" description="Helical" evidence="2">
    <location>
        <begin position="1175"/>
        <end position="1195"/>
    </location>
</feature>
<feature type="topological domain" description="Extracellular" evidence="6">
    <location>
        <begin position="1196"/>
        <end position="1207"/>
    </location>
</feature>
<feature type="transmembrane region" description="Helical" evidence="2">
    <location>
        <begin position="1208"/>
        <end position="1228"/>
    </location>
</feature>
<feature type="topological domain" description="Cytoplasmic" evidence="6">
    <location>
        <begin position="1229"/>
        <end position="1254"/>
    </location>
</feature>
<feature type="domain" description="SSD" evidence="3">
    <location>
        <begin position="592"/>
        <end position="757"/>
    </location>
</feature>
<feature type="glycosylation site" description="N-linked (GlcNAc...) asparagine" evidence="4">
    <location>
        <position position="123"/>
    </location>
</feature>
<feature type="glycosylation site" description="N-linked (GlcNAc...) asparagine" evidence="4">
    <location>
        <position position="132"/>
    </location>
</feature>
<feature type="glycosylation site" description="N-linked (GlcNAc...) asparagine" evidence="4">
    <location>
        <position position="389"/>
    </location>
</feature>
<feature type="glycosylation site" description="N-linked (GlcNAc...) asparagine" evidence="4">
    <location>
        <position position="479"/>
    </location>
</feature>
<feature type="glycosylation site" description="N-linked (GlcNAc...) asparagine" evidence="4">
    <location>
        <position position="896"/>
    </location>
</feature>
<feature type="glycosylation site" description="N-linked (GlcNAc...) asparagine" evidence="4">
    <location>
        <position position="939"/>
    </location>
</feature>
<feature type="disulfide bond" evidence="1">
    <location>
        <begin position="24"/>
        <end position="81"/>
    </location>
</feature>
<feature type="disulfide bond" evidence="1">
    <location>
        <begin position="62"/>
        <end position="116"/>
    </location>
</feature>
<feature type="disulfide bond" evidence="1">
    <location>
        <begin position="82"/>
        <end position="120"/>
    </location>
</feature>
<feature type="disulfide bond" evidence="1">
    <location>
        <begin position="104"/>
        <end position="241"/>
    </location>
</feature>
<feature type="disulfide bond" evidence="1">
    <location>
        <begin position="107"/>
        <end position="161"/>
    </location>
</feature>
<feature type="disulfide bond" evidence="1">
    <location>
        <begin position="178"/>
        <end position="186"/>
    </location>
</feature>
<feature type="disulfide bond" evidence="1">
    <location>
        <begin position="231"/>
        <end position="246"/>
    </location>
</feature>
<feature type="disulfide bond" evidence="1">
    <location>
        <begin position="243"/>
        <end position="250"/>
    </location>
</feature>
<feature type="disulfide bond" evidence="1">
    <location>
        <begin position="438"/>
        <end position="454"/>
    </location>
</feature>
<feature type="disulfide bond" evidence="1">
    <location>
        <begin position="491"/>
        <end position="500"/>
    </location>
</feature>
<feature type="disulfide bond" evidence="1">
    <location>
        <begin position="889"/>
        <end position="894"/>
    </location>
</feature>
<feature type="disulfide bond" evidence="1">
    <location>
        <begin position="935"/>
        <end position="990"/>
    </location>
</feature>
<feature type="disulfide bond" evidence="1">
    <location>
        <begin position="936"/>
        <end position="958"/>
    </location>
</feature>
<feature type="disulfide bond" evidence="1">
    <location>
        <begin position="946"/>
        <end position="955"/>
    </location>
</feature>
<organism evidence="9">
    <name type="scientific">Drosophila melanogaster</name>
    <name type="common">Fruit fly</name>
    <dbReference type="NCBI Taxonomy" id="7227"/>
    <lineage>
        <taxon>Eukaryota</taxon>
        <taxon>Metazoa</taxon>
        <taxon>Ecdysozoa</taxon>
        <taxon>Arthropoda</taxon>
        <taxon>Hexapoda</taxon>
        <taxon>Insecta</taxon>
        <taxon>Pterygota</taxon>
        <taxon>Neoptera</taxon>
        <taxon>Endopterygota</taxon>
        <taxon>Diptera</taxon>
        <taxon>Brachycera</taxon>
        <taxon>Muscomorpha</taxon>
        <taxon>Ephydroidea</taxon>
        <taxon>Drosophilidae</taxon>
        <taxon>Drosophila</taxon>
        <taxon>Sophophora</taxon>
    </lineage>
</organism>
<reference evidence="9" key="1">
    <citation type="journal article" date="2000" name="Science">
        <title>The genome sequence of Drosophila melanogaster.</title>
        <authorList>
            <person name="Adams M.D."/>
            <person name="Celniker S.E."/>
            <person name="Holt R.A."/>
            <person name="Evans C.A."/>
            <person name="Gocayne J.D."/>
            <person name="Amanatides P.G."/>
            <person name="Scherer S.E."/>
            <person name="Li P.W."/>
            <person name="Hoskins R.A."/>
            <person name="Galle R.F."/>
            <person name="George R.A."/>
            <person name="Lewis S.E."/>
            <person name="Richards S."/>
            <person name="Ashburner M."/>
            <person name="Henderson S.N."/>
            <person name="Sutton G.G."/>
            <person name="Wortman J.R."/>
            <person name="Yandell M.D."/>
            <person name="Zhang Q."/>
            <person name="Chen L.X."/>
            <person name="Brandon R.C."/>
            <person name="Rogers Y.-H.C."/>
            <person name="Blazej R.G."/>
            <person name="Champe M."/>
            <person name="Pfeiffer B.D."/>
            <person name="Wan K.H."/>
            <person name="Doyle C."/>
            <person name="Baxter E.G."/>
            <person name="Helt G."/>
            <person name="Nelson C.R."/>
            <person name="Miklos G.L.G."/>
            <person name="Abril J.F."/>
            <person name="Agbayani A."/>
            <person name="An H.-J."/>
            <person name="Andrews-Pfannkoch C."/>
            <person name="Baldwin D."/>
            <person name="Ballew R.M."/>
            <person name="Basu A."/>
            <person name="Baxendale J."/>
            <person name="Bayraktaroglu L."/>
            <person name="Beasley E.M."/>
            <person name="Beeson K.Y."/>
            <person name="Benos P.V."/>
            <person name="Berman B.P."/>
            <person name="Bhandari D."/>
            <person name="Bolshakov S."/>
            <person name="Borkova D."/>
            <person name="Botchan M.R."/>
            <person name="Bouck J."/>
            <person name="Brokstein P."/>
            <person name="Brottier P."/>
            <person name="Burtis K.C."/>
            <person name="Busam D.A."/>
            <person name="Butler H."/>
            <person name="Cadieu E."/>
            <person name="Center A."/>
            <person name="Chandra I."/>
            <person name="Cherry J.M."/>
            <person name="Cawley S."/>
            <person name="Dahlke C."/>
            <person name="Davenport L.B."/>
            <person name="Davies P."/>
            <person name="de Pablos B."/>
            <person name="Delcher A."/>
            <person name="Deng Z."/>
            <person name="Mays A.D."/>
            <person name="Dew I."/>
            <person name="Dietz S.M."/>
            <person name="Dodson K."/>
            <person name="Doup L.E."/>
            <person name="Downes M."/>
            <person name="Dugan-Rocha S."/>
            <person name="Dunkov B.C."/>
            <person name="Dunn P."/>
            <person name="Durbin K.J."/>
            <person name="Evangelista C.C."/>
            <person name="Ferraz C."/>
            <person name="Ferriera S."/>
            <person name="Fleischmann W."/>
            <person name="Fosler C."/>
            <person name="Gabrielian A.E."/>
            <person name="Garg N.S."/>
            <person name="Gelbart W.M."/>
            <person name="Glasser K."/>
            <person name="Glodek A."/>
            <person name="Gong F."/>
            <person name="Gorrell J.H."/>
            <person name="Gu Z."/>
            <person name="Guan P."/>
            <person name="Harris M."/>
            <person name="Harris N.L."/>
            <person name="Harvey D.A."/>
            <person name="Heiman T.J."/>
            <person name="Hernandez J.R."/>
            <person name="Houck J."/>
            <person name="Hostin D."/>
            <person name="Houston K.A."/>
            <person name="Howland T.J."/>
            <person name="Wei M.-H."/>
            <person name="Ibegwam C."/>
            <person name="Jalali M."/>
            <person name="Kalush F."/>
            <person name="Karpen G.H."/>
            <person name="Ke Z."/>
            <person name="Kennison J.A."/>
            <person name="Ketchum K.A."/>
            <person name="Kimmel B.E."/>
            <person name="Kodira C.D."/>
            <person name="Kraft C.L."/>
            <person name="Kravitz S."/>
            <person name="Kulp D."/>
            <person name="Lai Z."/>
            <person name="Lasko P."/>
            <person name="Lei Y."/>
            <person name="Levitsky A.A."/>
            <person name="Li J.H."/>
            <person name="Li Z."/>
            <person name="Liang Y."/>
            <person name="Lin X."/>
            <person name="Liu X."/>
            <person name="Mattei B."/>
            <person name="McIntosh T.C."/>
            <person name="McLeod M.P."/>
            <person name="McPherson D."/>
            <person name="Merkulov G."/>
            <person name="Milshina N.V."/>
            <person name="Mobarry C."/>
            <person name="Morris J."/>
            <person name="Moshrefi A."/>
            <person name="Mount S.M."/>
            <person name="Moy M."/>
            <person name="Murphy B."/>
            <person name="Murphy L."/>
            <person name="Muzny D.M."/>
            <person name="Nelson D.L."/>
            <person name="Nelson D.R."/>
            <person name="Nelson K.A."/>
            <person name="Nixon K."/>
            <person name="Nusskern D.R."/>
            <person name="Pacleb J.M."/>
            <person name="Palazzolo M."/>
            <person name="Pittman G.S."/>
            <person name="Pan S."/>
            <person name="Pollard J."/>
            <person name="Puri V."/>
            <person name="Reese M.G."/>
            <person name="Reinert K."/>
            <person name="Remington K."/>
            <person name="Saunders R.D.C."/>
            <person name="Scheeler F."/>
            <person name="Shen H."/>
            <person name="Shue B.C."/>
            <person name="Siden-Kiamos I."/>
            <person name="Simpson M."/>
            <person name="Skupski M.P."/>
            <person name="Smith T.J."/>
            <person name="Spier E."/>
            <person name="Spradling A.C."/>
            <person name="Stapleton M."/>
            <person name="Strong R."/>
            <person name="Sun E."/>
            <person name="Svirskas R."/>
            <person name="Tector C."/>
            <person name="Turner R."/>
            <person name="Venter E."/>
            <person name="Wang A.H."/>
            <person name="Wang X."/>
            <person name="Wang Z.-Y."/>
            <person name="Wassarman D.A."/>
            <person name="Weinstock G.M."/>
            <person name="Weissenbach J."/>
            <person name="Williams S.M."/>
            <person name="Woodage T."/>
            <person name="Worley K.C."/>
            <person name="Wu D."/>
            <person name="Yang S."/>
            <person name="Yao Q.A."/>
            <person name="Ye J."/>
            <person name="Yeh R.-F."/>
            <person name="Zaveri J.S."/>
            <person name="Zhan M."/>
            <person name="Zhang G."/>
            <person name="Zhao Q."/>
            <person name="Zheng L."/>
            <person name="Zheng X.H."/>
            <person name="Zhong F.N."/>
            <person name="Zhong W."/>
            <person name="Zhou X."/>
            <person name="Zhu S.C."/>
            <person name="Zhu X."/>
            <person name="Smith H.O."/>
            <person name="Gibbs R.A."/>
            <person name="Myers E.W."/>
            <person name="Rubin G.M."/>
            <person name="Venter J.C."/>
        </authorList>
    </citation>
    <scope>NUCLEOTIDE SEQUENCE [LARGE SCALE GENOMIC DNA]</scope>
    <source>
        <strain evidence="9">Berkeley</strain>
    </source>
</reference>
<reference evidence="9" key="2">
    <citation type="journal article" date="2002" name="Genome Biol.">
        <title>Annotation of the Drosophila melanogaster euchromatic genome: a systematic review.</title>
        <authorList>
            <person name="Misra S."/>
            <person name="Crosby M.A."/>
            <person name="Mungall C.J."/>
            <person name="Matthews B.B."/>
            <person name="Campbell K.S."/>
            <person name="Hradecky P."/>
            <person name="Huang Y."/>
            <person name="Kaminker J.S."/>
            <person name="Millburn G.H."/>
            <person name="Prochnik S.E."/>
            <person name="Smith C.D."/>
            <person name="Tupy J.L."/>
            <person name="Whitfield E.J."/>
            <person name="Bayraktaroglu L."/>
            <person name="Berman B.P."/>
            <person name="Bettencourt B.R."/>
            <person name="Celniker S.E."/>
            <person name="de Grey A.D.N.J."/>
            <person name="Drysdale R.A."/>
            <person name="Harris N.L."/>
            <person name="Richter J."/>
            <person name="Russo S."/>
            <person name="Schroeder A.J."/>
            <person name="Shu S.Q."/>
            <person name="Stapleton M."/>
            <person name="Yamada C."/>
            <person name="Ashburner M."/>
            <person name="Gelbart W.M."/>
            <person name="Rubin G.M."/>
            <person name="Lewis S.E."/>
        </authorList>
    </citation>
    <scope>GENOME REANNOTATION</scope>
    <source>
        <strain evidence="9">Berkeley</strain>
    </source>
</reference>
<reference evidence="6" key="3">
    <citation type="journal article" date="2007" name="Cell Metab.">
        <title>Drosophila NPC1b promotes an early step in sterol absorption from the midgut epithelium.</title>
        <authorList>
            <person name="Voght S.P."/>
            <person name="Fluegel M.L."/>
            <person name="Andrews L.A."/>
            <person name="Pallanck L.J."/>
        </authorList>
    </citation>
    <scope>FUNCTION</scope>
    <scope>SUBCELLULAR LOCATION</scope>
    <scope>TISSUE SPECIFICITY</scope>
    <scope>DEVELOPMENTAL STAGE</scope>
    <scope>DISRUPTION PHENOTYPE</scope>
</reference>
<evidence type="ECO:0000250" key="1">
    <source>
        <dbReference type="UniProtKB" id="O15118"/>
    </source>
</evidence>
<evidence type="ECO:0000255" key="2"/>
<evidence type="ECO:0000255" key="3">
    <source>
        <dbReference type="PROSITE-ProRule" id="PRU00199"/>
    </source>
</evidence>
<evidence type="ECO:0000255" key="4">
    <source>
        <dbReference type="PROSITE-ProRule" id="PRU00498"/>
    </source>
</evidence>
<evidence type="ECO:0000269" key="5">
    <source>
    </source>
</evidence>
<evidence type="ECO:0000305" key="6"/>
<evidence type="ECO:0000305" key="7">
    <source>
    </source>
</evidence>
<evidence type="ECO:0000312" key="8">
    <source>
        <dbReference type="FlyBase" id="FBgn0261675"/>
    </source>
</evidence>
<evidence type="ECO:0000312" key="9">
    <source>
        <dbReference type="Proteomes" id="UP000000803"/>
    </source>
</evidence>
<sequence length="1254" mass="139556">MKVIFATIWLIAGAWSQSAEQLGCIWYGQSHMIGAHWVNKGDTNPARPLNSPTSEAIFAKRCPMLYKEYKGESGEDELSLCCDAAQIETMESGLSQADGVFSRCPTCTRNMALTVCAMTCAKNHTLFLTAYNDTNDAGVDYVKYIDYRLTDDTVSKIYNSCIGIQHTQTGRPAMDLGCGSYNAKTCNYRRWYEFMGDVSGDYVPFQINYKWSEDAEEGSNEIYLDLSPLKCGESYEDSYACACIDCEESCPLTDAPTGPDELWKIAGLYGVTFILALIIACALSFFIFWGAFGKTSAPSVCMPTLFGEFFYHGFRIWGTFCAKHPVIVLALCSWAIAGLSFGIRYMTITTDPVELWAGEESQTRIEKDYFDQHFGPFYRTNQMFVKAVNQTYFTHETSNGVLNFGPAFEYNFLKEVFELQDSIMKLGMADNEGLDKICYAPVLMAGETPTVDRCAIQSVYGYFQHDMDRFENSYVDSNNYTINYLNQLEDCLRVPMMEDCFGTFGGPIEPGIAVGGMPKVAVGEDPDYMLATGLVLTFLGRNYNDESKLEPNMKWEKLFVDFLRDYKSDRLDIAYMAERSIQDAIVELSEGEVSTVVISYVVMFVYVAIALGHIRSCRGFLRESRIMLAIGGIVIVLASVVCSLGFWGYLDVTTTMLAIEVIPFLVLAVGVDNIFIMVHTYQRLDHSKFKTTHEAIGEAIGQVGPSILQTAGSEMACFAIGCISDMPAVKTFAMYAAIAILLDFLLQITAFVALMAIDEKRYLDGRLDMLCCVKSGGKKINDEDGDGVDRPKEVGLLETLFKNFYSPFLLSKPVKVSVLLIFTVITCLSLMVTPSIEKGLDQEMSMPKNSHVVKYFRYMVDLLAMGAPVYWVLKPGLNYSEPLQQNLICGGVECNNNSLSVQLYTQAQYPEITSLARPASSWLDDYIDWLAISDCCKYNVTTGGFCSSNSKSEDCLPCERGFTENGLRPDAETFNKYIPYFLFDLPDAECAKAGRASYADAVIYTIDDVGMSTVQDSYFMQYSTTSTTSEEFYSQLREVRRISGEINAMFKENNVDAEIFAYCVFYIYYEQYLTIWGDAMFSLGMSLVAIFLVTLLITGLDITSTFIVLFMVICILINMLGMMWAWSINLNAISLVNLVVCVGIGVEFVAHIVRSFKRAEGTAQERARHSLNVTGSSVLSGITLTKFAGIVVLGFSNSQIFQVFYFRMYLGIVLIGAAHGLILLPVLLSLLGPPQKLARSSGAEPTASITITTN</sequence>
<dbReference type="EMBL" id="AE014298">
    <property type="protein sequence ID" value="AAF50873.2"/>
    <property type="molecule type" value="Genomic_DNA"/>
</dbReference>
<dbReference type="RefSeq" id="NP_608417.2">
    <property type="nucleotide sequence ID" value="NM_134573.3"/>
</dbReference>
<dbReference type="SMR" id="Q9VRC9"/>
<dbReference type="FunCoup" id="Q9VRC9">
    <property type="interactions" value="144"/>
</dbReference>
<dbReference type="IntAct" id="Q9VRC9">
    <property type="interactions" value="1"/>
</dbReference>
<dbReference type="STRING" id="7227.FBpp0076932"/>
<dbReference type="GlyCosmos" id="Q9VRC9">
    <property type="glycosylation" value="6 sites, No reported glycans"/>
</dbReference>
<dbReference type="GlyGen" id="Q9VRC9">
    <property type="glycosylation" value="6 sites"/>
</dbReference>
<dbReference type="PaxDb" id="7227-FBpp0076932"/>
<dbReference type="EnsemblMetazoa" id="FBtr0077239">
    <property type="protein sequence ID" value="FBpp0076932"/>
    <property type="gene ID" value="FBgn0261675"/>
</dbReference>
<dbReference type="GeneID" id="33072"/>
<dbReference type="KEGG" id="dme:Dmel_CG12092"/>
<dbReference type="UCSC" id="CG12092-RA">
    <property type="organism name" value="d. melanogaster"/>
</dbReference>
<dbReference type="AGR" id="FB:FBgn0261675"/>
<dbReference type="CTD" id="33072"/>
<dbReference type="FlyBase" id="FBgn0261675">
    <property type="gene designation" value="Npc1b"/>
</dbReference>
<dbReference type="VEuPathDB" id="VectorBase:FBgn0261675"/>
<dbReference type="eggNOG" id="KOG1933">
    <property type="taxonomic scope" value="Eukaryota"/>
</dbReference>
<dbReference type="HOGENOM" id="CLU_002359_0_0_1"/>
<dbReference type="InParanoid" id="Q9VRC9"/>
<dbReference type="OMA" id="NIFIMVH"/>
<dbReference type="OrthoDB" id="6510177at2759"/>
<dbReference type="PhylomeDB" id="Q9VRC9"/>
<dbReference type="Reactome" id="R-DME-8963678">
    <property type="pathway name" value="Intestinal lipid absorption"/>
</dbReference>
<dbReference type="BioGRID-ORCS" id="33072">
    <property type="hits" value="0 hits in 3 CRISPR screens"/>
</dbReference>
<dbReference type="GenomeRNAi" id="33072"/>
<dbReference type="PRO" id="PR:Q9VRC9"/>
<dbReference type="Proteomes" id="UP000000803">
    <property type="component" value="Chromosome X"/>
</dbReference>
<dbReference type="Bgee" id="FBgn0261675">
    <property type="expression patterns" value="Expressed in midgut large flat cell (Drosophila) in digestive tract and 15 other cell types or tissues"/>
</dbReference>
<dbReference type="GO" id="GO:0016020">
    <property type="term" value="C:membrane"/>
    <property type="evidence" value="ECO:0000255"/>
    <property type="project" value="FlyBase"/>
</dbReference>
<dbReference type="GO" id="GO:0005886">
    <property type="term" value="C:plasma membrane"/>
    <property type="evidence" value="ECO:0000318"/>
    <property type="project" value="GO_Central"/>
</dbReference>
<dbReference type="GO" id="GO:0015485">
    <property type="term" value="F:cholesterol binding"/>
    <property type="evidence" value="ECO:0000318"/>
    <property type="project" value="GO_Central"/>
</dbReference>
<dbReference type="GO" id="GO:0005319">
    <property type="term" value="F:lipid transporter activity"/>
    <property type="evidence" value="ECO:0000303"/>
    <property type="project" value="FlyBase"/>
</dbReference>
<dbReference type="GO" id="GO:0007417">
    <property type="term" value="P:central nervous system development"/>
    <property type="evidence" value="ECO:0000315"/>
    <property type="project" value="FlyBase"/>
</dbReference>
<dbReference type="GO" id="GO:0042632">
    <property type="term" value="P:cholesterol homeostasis"/>
    <property type="evidence" value="ECO:0000318"/>
    <property type="project" value="GO_Central"/>
</dbReference>
<dbReference type="GO" id="GO:0008203">
    <property type="term" value="P:cholesterol metabolic process"/>
    <property type="evidence" value="ECO:0007669"/>
    <property type="project" value="UniProtKB-KW"/>
</dbReference>
<dbReference type="GO" id="GO:0030301">
    <property type="term" value="P:cholesterol transport"/>
    <property type="evidence" value="ECO:0000250"/>
    <property type="project" value="FlyBase"/>
</dbReference>
<dbReference type="GO" id="GO:0007391">
    <property type="term" value="P:dorsal closure"/>
    <property type="evidence" value="ECO:0000315"/>
    <property type="project" value="FlyBase"/>
</dbReference>
<dbReference type="GO" id="GO:0030299">
    <property type="term" value="P:intestinal cholesterol absorption"/>
    <property type="evidence" value="ECO:0000315"/>
    <property type="project" value="FlyBase"/>
</dbReference>
<dbReference type="GO" id="GO:0007422">
    <property type="term" value="P:peripheral nervous system development"/>
    <property type="evidence" value="ECO:0000315"/>
    <property type="project" value="FlyBase"/>
</dbReference>
<dbReference type="GO" id="GO:0015918">
    <property type="term" value="P:sterol transport"/>
    <property type="evidence" value="ECO:0000318"/>
    <property type="project" value="GO_Central"/>
</dbReference>
<dbReference type="FunFam" id="1.20.1640.10:FF:000075">
    <property type="entry name" value="Niemann-Pick C1 protein"/>
    <property type="match status" value="1"/>
</dbReference>
<dbReference type="FunFam" id="1.20.1640.10:FF:000010">
    <property type="entry name" value="NPC intracellular cholesterol transporter 1"/>
    <property type="match status" value="1"/>
</dbReference>
<dbReference type="Gene3D" id="1.20.1640.10">
    <property type="entry name" value="Multidrug efflux transporter AcrB transmembrane domain"/>
    <property type="match status" value="2"/>
</dbReference>
<dbReference type="InterPro" id="IPR053958">
    <property type="entry name" value="HMGCR/SNAP/NPC1-like_SSD"/>
</dbReference>
<dbReference type="InterPro" id="IPR053956">
    <property type="entry name" value="NPC1_MLD"/>
</dbReference>
<dbReference type="InterPro" id="IPR032190">
    <property type="entry name" value="NPC1_N"/>
</dbReference>
<dbReference type="InterPro" id="IPR000731">
    <property type="entry name" value="SSD"/>
</dbReference>
<dbReference type="PANTHER" id="PTHR45727">
    <property type="entry name" value="NPC INTRACELLULAR CHOLESTEROL TRANSPORTER 1"/>
    <property type="match status" value="1"/>
</dbReference>
<dbReference type="PANTHER" id="PTHR45727:SF6">
    <property type="entry name" value="NPC INTRACELLULAR CHOLESTEROL TRANSPORTER 1 HOMOLOG 1B"/>
    <property type="match status" value="1"/>
</dbReference>
<dbReference type="Pfam" id="PF22314">
    <property type="entry name" value="NPC1_MLD"/>
    <property type="match status" value="1"/>
</dbReference>
<dbReference type="Pfam" id="PF16414">
    <property type="entry name" value="NPC1_N"/>
    <property type="match status" value="1"/>
</dbReference>
<dbReference type="Pfam" id="PF12349">
    <property type="entry name" value="Sterol-sensing"/>
    <property type="match status" value="1"/>
</dbReference>
<dbReference type="SUPFAM" id="SSF82866">
    <property type="entry name" value="Multidrug efflux transporter AcrB transmembrane domain"/>
    <property type="match status" value="2"/>
</dbReference>
<dbReference type="PROSITE" id="PS50156">
    <property type="entry name" value="SSD"/>
    <property type="match status" value="1"/>
</dbReference>